<evidence type="ECO:0000255" key="1">
    <source>
        <dbReference type="HAMAP-Rule" id="MF_04069"/>
    </source>
</evidence>
<evidence type="ECO:0000256" key="2">
    <source>
        <dbReference type="SAM" id="MobiDB-lite"/>
    </source>
</evidence>
<gene>
    <name evidence="1" type="primary">M</name>
</gene>
<feature type="chain" id="PRO_0000326345" description="Matrix protein 2">
    <location>
        <begin position="1"/>
        <end position="97"/>
    </location>
</feature>
<feature type="topological domain" description="Virion surface" evidence="1">
    <location>
        <begin position="1"/>
        <end position="22"/>
    </location>
</feature>
<feature type="transmembrane region" description="Helical; Signal-anchor for type III membrane protein" evidence="1">
    <location>
        <begin position="23"/>
        <end position="43"/>
    </location>
</feature>
<feature type="topological domain" description="Intravirion" evidence="1">
    <location>
        <begin position="44"/>
        <end position="97"/>
    </location>
</feature>
<feature type="region of interest" description="Disordered" evidence="2">
    <location>
        <begin position="59"/>
        <end position="88"/>
    </location>
</feature>
<feature type="compositionally biased region" description="Basic and acidic residues" evidence="2">
    <location>
        <begin position="71"/>
        <end position="80"/>
    </location>
</feature>
<feature type="site" description="Essential for channel activity, possibly by being protonated during channel activation, and by forming the channel gate and the selective filter" evidence="1">
    <location>
        <position position="37"/>
    </location>
</feature>
<feature type="site" description="Seems to be involved in pH gating" evidence="1">
    <location>
        <position position="41"/>
    </location>
</feature>
<feature type="modified residue" description="Phosphoserine; by host" evidence="1">
    <location>
        <position position="64"/>
    </location>
</feature>
<feature type="modified residue" description="Phosphoserine; by host" evidence="1">
    <location>
        <position position="82"/>
    </location>
</feature>
<feature type="modified residue" description="Phosphoserine; by host" evidence="1">
    <location>
        <position position="93"/>
    </location>
</feature>
<feature type="lipid moiety-binding region" description="S-palmitoyl cysteine; by host" evidence="1">
    <location>
        <position position="50"/>
    </location>
</feature>
<feature type="glycosylation site" description="N-linked (GlcNAc...) asparagine; by host" evidence="1">
    <location>
        <position position="20"/>
    </location>
</feature>
<feature type="disulfide bond" description="Interchain (with C-17)" evidence="1">
    <location>
        <position position="17"/>
    </location>
</feature>
<feature type="disulfide bond" description="Interchain (with C-19)" evidence="1">
    <location>
        <position position="19"/>
    </location>
</feature>
<comment type="function">
    <text evidence="1">Forms a proton-selective ion channel that is necessary for the efficient release of the viral genome during virus entry. After attaching to the cell surface, the virion enters the cell by endocytosis. Acidification of the endosome triggers M2 ion channel activity. The influx of protons into virion interior is believed to disrupt interactions between the viral ribonucleoprotein (RNP), matrix protein 1 (M1), and lipid bilayers, thereby freeing the viral genome from interaction with viral proteins and enabling RNA segments to migrate to the host cell nucleus, where influenza virus RNA transcription and replication occur. Also plays a role in viral proteins secretory pathway. Elevates the intravesicular pH of normally acidic compartments, such as trans-Golgi network, preventing newly formed hemagglutinin from premature switching to the fusion-active conformation.</text>
</comment>
<comment type="activity regulation">
    <text>The M2 protein from most influenza A strains is inhibited by amantadine and rimantadine, resulting in viral uncoating incapacity. Emergence of amantadine-resistant variants is usually rapid.</text>
</comment>
<comment type="subunit">
    <text evidence="1">Homotetramer; composed of two disulfide-linked dimers held together by non-covalent interactions. May interact with matrix protein 1.</text>
</comment>
<comment type="subcellular location">
    <subcellularLocation>
        <location evidence="1">Virion membrane</location>
    </subcellularLocation>
    <subcellularLocation>
        <location evidence="1">Host apical cell membrane</location>
        <topology evidence="1">Single-pass type III membrane protein</topology>
    </subcellularLocation>
    <text evidence="1">Abundantly expressed at the apical plasma membrane in infected polarized epithelial cells, in close proximity to budding and assembled virions. Minor component of virions (only 16-20 molecules/virion).</text>
</comment>
<comment type="alternative products">
    <event type="alternative splicing"/>
    <isoform>
        <id>Q6XTV0-1</id>
        <name>M2</name>
        <sequence type="displayed"/>
    </isoform>
    <isoform>
        <id>Q6XTU9-1</id>
        <name>M1</name>
        <sequence type="external"/>
    </isoform>
    <text>Only the first 9 residues are shared by the 2 isoforms.</text>
</comment>
<comment type="domain">
    <text evidence="1">Cytoplasmic tail plays an important role in virion assembly and morphogenesis.</text>
</comment>
<comment type="miscellaneous">
    <text evidence="1">When the channel is activated, one or more imidazole moieties of His-37 probably become bi-protonated.</text>
</comment>
<comment type="similarity">
    <text evidence="1">Belongs to the influenza viruses matrix protein M2 family.</text>
</comment>
<proteinExistence type="inferred from homology"/>
<dbReference type="EMBL" id="AY210059">
    <property type="protein sequence ID" value="AAO46409.1"/>
    <property type="molecule type" value="Genomic_RNA"/>
</dbReference>
<dbReference type="SMR" id="Q6XTV0"/>
<dbReference type="IntAct" id="Q6XTV0">
    <property type="interactions" value="1"/>
</dbReference>
<dbReference type="GlyCosmos" id="Q6XTV0">
    <property type="glycosylation" value="1 site, No reported glycans"/>
</dbReference>
<dbReference type="GO" id="GO:0020002">
    <property type="term" value="C:host cell plasma membrane"/>
    <property type="evidence" value="ECO:0007669"/>
    <property type="project" value="UniProtKB-SubCell"/>
</dbReference>
<dbReference type="GO" id="GO:0016020">
    <property type="term" value="C:membrane"/>
    <property type="evidence" value="ECO:0007669"/>
    <property type="project" value="UniProtKB-UniRule"/>
</dbReference>
<dbReference type="GO" id="GO:0055036">
    <property type="term" value="C:virion membrane"/>
    <property type="evidence" value="ECO:0007669"/>
    <property type="project" value="UniProtKB-SubCell"/>
</dbReference>
<dbReference type="GO" id="GO:0005216">
    <property type="term" value="F:monoatomic ion channel activity"/>
    <property type="evidence" value="ECO:0007669"/>
    <property type="project" value="UniProtKB-UniRule"/>
</dbReference>
<dbReference type="GO" id="GO:0015078">
    <property type="term" value="F:proton transmembrane transporter activity"/>
    <property type="evidence" value="ECO:0007669"/>
    <property type="project" value="UniProtKB-UniRule"/>
</dbReference>
<dbReference type="GO" id="GO:0051259">
    <property type="term" value="P:protein complex oligomerization"/>
    <property type="evidence" value="ECO:0007669"/>
    <property type="project" value="UniProtKB-UniRule"/>
</dbReference>
<dbReference type="GO" id="GO:0044694">
    <property type="term" value="P:symbiont genome entry into host cell via pore formation in plasma membrane"/>
    <property type="evidence" value="ECO:0007669"/>
    <property type="project" value="UniProtKB-UniRule"/>
</dbReference>
<dbReference type="GO" id="GO:0140321">
    <property type="term" value="P:symbiont-mediated suppression of host autophagy"/>
    <property type="evidence" value="ECO:0007669"/>
    <property type="project" value="UniProtKB-KW"/>
</dbReference>
<dbReference type="Gene3D" id="6.10.250.1640">
    <property type="match status" value="1"/>
</dbReference>
<dbReference type="HAMAP" id="MF_04069">
    <property type="entry name" value="INFV_M2"/>
    <property type="match status" value="1"/>
</dbReference>
<dbReference type="InterPro" id="IPR002089">
    <property type="entry name" value="Flu_M2"/>
</dbReference>
<dbReference type="Pfam" id="PF00599">
    <property type="entry name" value="Flu_M2"/>
    <property type="match status" value="1"/>
</dbReference>
<name>M2_I67A0</name>
<protein>
    <recommendedName>
        <fullName evidence="1">Matrix protein 2</fullName>
    </recommendedName>
    <alternativeName>
        <fullName evidence="1">Proton channel protein M2</fullName>
    </alternativeName>
</protein>
<organismHost>
    <name type="scientific">Aves</name>
    <dbReference type="NCBI Taxonomy" id="8782"/>
</organismHost>
<organismHost>
    <name type="scientific">Homo sapiens</name>
    <name type="common">Human</name>
    <dbReference type="NCBI Taxonomy" id="9606"/>
</organismHost>
<keyword id="KW-0025">Alternative splicing</keyword>
<keyword id="KW-1015">Disulfide bond</keyword>
<keyword id="KW-0325">Glycoprotein</keyword>
<keyword id="KW-1032">Host cell membrane</keyword>
<keyword id="KW-1043">Host membrane</keyword>
<keyword id="KW-0945">Host-virus interaction</keyword>
<keyword id="KW-0375">Hydrogen ion transport</keyword>
<keyword id="KW-1083">Inhibition of host autophagy by virus</keyword>
<keyword id="KW-0407">Ion channel</keyword>
<keyword id="KW-0406">Ion transport</keyword>
<keyword id="KW-0449">Lipoprotein</keyword>
<keyword id="KW-0472">Membrane</keyword>
<keyword id="KW-0564">Palmitate</keyword>
<keyword id="KW-0597">Phosphoprotein</keyword>
<keyword id="KW-0735">Signal-anchor</keyword>
<keyword id="KW-0812">Transmembrane</keyword>
<keyword id="KW-1133">Transmembrane helix</keyword>
<keyword id="KW-0813">Transport</keyword>
<keyword id="KW-1182">Viral ion channel</keyword>
<keyword id="KW-0946">Virion</keyword>
<reference key="1">
    <citation type="journal article" date="2004" name="Virology">
        <title>Genetic analysis of human H2N2 and early H3N2 influenza viruses, 1957-1972: evidence for genetic divergence and multiple reassortment events.</title>
        <authorList>
            <person name="Lindstrom S.E."/>
            <person name="Cox N.J."/>
            <person name="Klimov A."/>
        </authorList>
    </citation>
    <scope>NUCLEOTIDE SEQUENCE [GENOMIC RNA]</scope>
</reference>
<sequence>MSLLTEVETPIRNEWGCRCNDSSDPLVVAASIIGILHLILWILDRLFFKCIYRFFEHGLKRGPSTEGVPESMREEYRKEQQSAVDADDGHFVSIELE</sequence>
<accession>Q6XTV0</accession>
<organism>
    <name type="scientific">Influenza A virus (strain A/Tokyo/3/1967 H2N2)</name>
    <dbReference type="NCBI Taxonomy" id="380960"/>
    <lineage>
        <taxon>Viruses</taxon>
        <taxon>Riboviria</taxon>
        <taxon>Orthornavirae</taxon>
        <taxon>Negarnaviricota</taxon>
        <taxon>Polyploviricotina</taxon>
        <taxon>Insthoviricetes</taxon>
        <taxon>Articulavirales</taxon>
        <taxon>Orthomyxoviridae</taxon>
        <taxon>Alphainfluenzavirus</taxon>
        <taxon>Alphainfluenzavirus influenzae</taxon>
        <taxon>Influenza A virus</taxon>
    </lineage>
</organism>